<sequence>MTRPVVASIDLLALRQNLQIVRRAAPGSRLWAVDKDNAYGHGVARVWSALSAADGFALLNLEEAILLREQGWKGPILLLEGFFHADELAVLDQYRLPTSVHSNWQIKALQQAKLRAPLDIYLKVNSGMNRLGFMPERVHTVWQQLRAISNVGEMTLMSHFAEAENPQGIVEPMRRIEQAAEGLDCPRSLANSAATLWHPEAHFDWVRPGIVLYGASPSGQWQDIANTGLKPVMTLRSEIIGVQNLRPGEAIGYGGLYRTTQEQRIGIVACGYADGYPRVAPSGTPVLVDGVRTTTVGRVSMDMLAVDLTPCPQAGIGAPVELWGKEIKIDDVAASSGTVGYELMCALAPRVPVVTL</sequence>
<feature type="chain" id="PRO_0000114525" description="Alanine racemase, catabolic">
    <location>
        <begin position="1"/>
        <end position="356"/>
    </location>
</feature>
<feature type="active site" description="Proton acceptor; specific for D-alanine" evidence="1">
    <location>
        <position position="35"/>
    </location>
</feature>
<feature type="active site" description="Proton acceptor; specific for L-alanine" evidence="1">
    <location>
        <position position="253"/>
    </location>
</feature>
<feature type="binding site" evidence="1">
    <location>
        <position position="130"/>
    </location>
    <ligand>
        <name>substrate</name>
    </ligand>
</feature>
<feature type="binding site" evidence="1">
    <location>
        <position position="301"/>
    </location>
    <ligand>
        <name>substrate</name>
    </ligand>
</feature>
<feature type="modified residue" description="N6-(pyridoxal phosphate)lysine" evidence="1">
    <location>
        <position position="35"/>
    </location>
</feature>
<comment type="function">
    <text evidence="1">Isomerizes L-alanine to D-alanine which is then oxidized to pyruvate by DadA.</text>
</comment>
<comment type="catalytic activity">
    <reaction>
        <text>L-alanine = D-alanine</text>
        <dbReference type="Rhea" id="RHEA:20249"/>
        <dbReference type="ChEBI" id="CHEBI:57416"/>
        <dbReference type="ChEBI" id="CHEBI:57972"/>
        <dbReference type="EC" id="5.1.1.1"/>
    </reaction>
</comment>
<comment type="cofactor">
    <cofactor evidence="1">
        <name>pyridoxal 5'-phosphate</name>
        <dbReference type="ChEBI" id="CHEBI:597326"/>
    </cofactor>
</comment>
<comment type="similarity">
    <text evidence="2">Belongs to the alanine racemase family.</text>
</comment>
<evidence type="ECO:0000250" key="1"/>
<evidence type="ECO:0000305" key="2"/>
<accession>O30746</accession>
<gene>
    <name type="primary">dadB</name>
</gene>
<keyword id="KW-0413">Isomerase</keyword>
<keyword id="KW-0663">Pyridoxal phosphate</keyword>
<organism>
    <name type="scientific">Klebsiella aerogenes</name>
    <name type="common">Enterobacter aerogenes</name>
    <dbReference type="NCBI Taxonomy" id="548"/>
    <lineage>
        <taxon>Bacteria</taxon>
        <taxon>Pseudomonadati</taxon>
        <taxon>Pseudomonadota</taxon>
        <taxon>Gammaproteobacteria</taxon>
        <taxon>Enterobacterales</taxon>
        <taxon>Enterobacteriaceae</taxon>
        <taxon>Klebsiella/Raoultella group</taxon>
        <taxon>Klebsiella</taxon>
    </lineage>
</organism>
<name>ALR2_KLEAE</name>
<dbReference type="EC" id="5.1.1.1"/>
<dbReference type="EMBL" id="AF016253">
    <property type="protein sequence ID" value="AAC38140.1"/>
    <property type="molecule type" value="Genomic_DNA"/>
</dbReference>
<dbReference type="SMR" id="O30746"/>
<dbReference type="STRING" id="548.EAG7_01003"/>
<dbReference type="GO" id="GO:0005829">
    <property type="term" value="C:cytosol"/>
    <property type="evidence" value="ECO:0007669"/>
    <property type="project" value="TreeGrafter"/>
</dbReference>
<dbReference type="GO" id="GO:0008784">
    <property type="term" value="F:alanine racemase activity"/>
    <property type="evidence" value="ECO:0007669"/>
    <property type="project" value="UniProtKB-UniRule"/>
</dbReference>
<dbReference type="GO" id="GO:0030170">
    <property type="term" value="F:pyridoxal phosphate binding"/>
    <property type="evidence" value="ECO:0007669"/>
    <property type="project" value="UniProtKB-UniRule"/>
</dbReference>
<dbReference type="GO" id="GO:0030632">
    <property type="term" value="P:D-alanine biosynthetic process"/>
    <property type="evidence" value="ECO:0007669"/>
    <property type="project" value="UniProtKB-UniRule"/>
</dbReference>
<dbReference type="CDD" id="cd06827">
    <property type="entry name" value="PLPDE_III_AR_proteobact"/>
    <property type="match status" value="1"/>
</dbReference>
<dbReference type="FunFam" id="2.40.37.10:FF:000002">
    <property type="entry name" value="Alanine racemase"/>
    <property type="match status" value="1"/>
</dbReference>
<dbReference type="FunFam" id="3.20.20.10:FF:000002">
    <property type="entry name" value="Alanine racemase"/>
    <property type="match status" value="1"/>
</dbReference>
<dbReference type="Gene3D" id="3.20.20.10">
    <property type="entry name" value="Alanine racemase"/>
    <property type="match status" value="1"/>
</dbReference>
<dbReference type="Gene3D" id="2.40.37.10">
    <property type="entry name" value="Lyase, Ornithine Decarboxylase, Chain A, domain 1"/>
    <property type="match status" value="1"/>
</dbReference>
<dbReference type="HAMAP" id="MF_01201">
    <property type="entry name" value="Ala_racemase"/>
    <property type="match status" value="1"/>
</dbReference>
<dbReference type="InterPro" id="IPR000821">
    <property type="entry name" value="Ala_racemase"/>
</dbReference>
<dbReference type="InterPro" id="IPR009006">
    <property type="entry name" value="Ala_racemase/Decarboxylase_C"/>
</dbReference>
<dbReference type="InterPro" id="IPR011079">
    <property type="entry name" value="Ala_racemase_C"/>
</dbReference>
<dbReference type="InterPro" id="IPR001608">
    <property type="entry name" value="Ala_racemase_N"/>
</dbReference>
<dbReference type="InterPro" id="IPR020622">
    <property type="entry name" value="Ala_racemase_pyridoxalP-BS"/>
</dbReference>
<dbReference type="InterPro" id="IPR029066">
    <property type="entry name" value="PLP-binding_barrel"/>
</dbReference>
<dbReference type="NCBIfam" id="TIGR00492">
    <property type="entry name" value="alr"/>
    <property type="match status" value="1"/>
</dbReference>
<dbReference type="NCBIfam" id="NF002970">
    <property type="entry name" value="PRK03646.1"/>
    <property type="match status" value="1"/>
</dbReference>
<dbReference type="PANTHER" id="PTHR30511">
    <property type="entry name" value="ALANINE RACEMASE"/>
    <property type="match status" value="1"/>
</dbReference>
<dbReference type="PANTHER" id="PTHR30511:SF0">
    <property type="entry name" value="ALANINE RACEMASE, CATABOLIC-RELATED"/>
    <property type="match status" value="1"/>
</dbReference>
<dbReference type="Pfam" id="PF00842">
    <property type="entry name" value="Ala_racemase_C"/>
    <property type="match status" value="1"/>
</dbReference>
<dbReference type="Pfam" id="PF01168">
    <property type="entry name" value="Ala_racemase_N"/>
    <property type="match status" value="1"/>
</dbReference>
<dbReference type="PRINTS" id="PR00992">
    <property type="entry name" value="ALARACEMASE"/>
</dbReference>
<dbReference type="SMART" id="SM01005">
    <property type="entry name" value="Ala_racemase_C"/>
    <property type="match status" value="1"/>
</dbReference>
<dbReference type="SUPFAM" id="SSF50621">
    <property type="entry name" value="Alanine racemase C-terminal domain-like"/>
    <property type="match status" value="1"/>
</dbReference>
<dbReference type="SUPFAM" id="SSF51419">
    <property type="entry name" value="PLP-binding barrel"/>
    <property type="match status" value="1"/>
</dbReference>
<dbReference type="PROSITE" id="PS00395">
    <property type="entry name" value="ALANINE_RACEMASE"/>
    <property type="match status" value="1"/>
</dbReference>
<proteinExistence type="inferred from homology"/>
<protein>
    <recommendedName>
        <fullName>Alanine racemase, catabolic</fullName>
        <ecNumber>5.1.1.1</ecNumber>
    </recommendedName>
</protein>
<reference key="1">
    <citation type="journal article" date="1998" name="J. Bacteriol.">
        <title>Alanine catabolism in Klebsiella aerogenes: molecular characterization of the dadAB operon and its regulation by the nitrogen assimilation control protein.</title>
        <authorList>
            <person name="Janes B.K."/>
            <person name="Bender R.A."/>
        </authorList>
    </citation>
    <scope>NUCLEOTIDE SEQUENCE [GENOMIC DNA]</scope>
    <source>
        <strain>W70</strain>
    </source>
</reference>